<dbReference type="EC" id="1.5.3.18"/>
<dbReference type="EMBL" id="CU329670">
    <property type="protein sequence ID" value="CAB59618.1"/>
    <property type="molecule type" value="Genomic_DNA"/>
</dbReference>
<dbReference type="PIR" id="T37605">
    <property type="entry name" value="T37605"/>
</dbReference>
<dbReference type="RefSeq" id="NP_593171.1">
    <property type="nucleotide sequence ID" value="NM_001018568.2"/>
</dbReference>
<dbReference type="SMR" id="Q9UTM9"/>
<dbReference type="BioGRID" id="278260">
    <property type="interactions" value="3"/>
</dbReference>
<dbReference type="FunCoup" id="Q9UTM9">
    <property type="interactions" value="90"/>
</dbReference>
<dbReference type="STRING" id="284812.Q9UTM9"/>
<dbReference type="GlyCosmos" id="Q9UTM9">
    <property type="glycosylation" value="4 sites, No reported glycans"/>
</dbReference>
<dbReference type="iPTMnet" id="Q9UTM9"/>
<dbReference type="PaxDb" id="4896-SPAC139.04c.1"/>
<dbReference type="EnsemblFungi" id="SPAC139.04c.1">
    <property type="protein sequence ID" value="SPAC139.04c.1:pep"/>
    <property type="gene ID" value="SPAC139.04c"/>
</dbReference>
<dbReference type="GeneID" id="2541766"/>
<dbReference type="KEGG" id="spo:2541766"/>
<dbReference type="PomBase" id="SPAC139.04c">
    <property type="gene designation" value="fap2"/>
</dbReference>
<dbReference type="VEuPathDB" id="FungiDB:SPAC139.04c"/>
<dbReference type="eggNOG" id="KOG2820">
    <property type="taxonomic scope" value="Eukaryota"/>
</dbReference>
<dbReference type="HOGENOM" id="CLU_007884_0_1_1"/>
<dbReference type="InParanoid" id="Q9UTM9"/>
<dbReference type="OMA" id="QFMPLED"/>
<dbReference type="PhylomeDB" id="Q9UTM9"/>
<dbReference type="BioCyc" id="MetaCyc:MONOMER-16096"/>
<dbReference type="BRENDA" id="1.5.3.18">
    <property type="organism ID" value="5613"/>
</dbReference>
<dbReference type="Reactome" id="R-SPO-71064">
    <property type="pathway name" value="Lysine catabolism"/>
</dbReference>
<dbReference type="Reactome" id="R-SPO-9033241">
    <property type="pathway name" value="Peroxisomal protein import"/>
</dbReference>
<dbReference type="SABIO-RK" id="Q9UTM9"/>
<dbReference type="PRO" id="PR:Q9UTM9"/>
<dbReference type="Proteomes" id="UP000002485">
    <property type="component" value="Chromosome I"/>
</dbReference>
<dbReference type="GO" id="GO:0005829">
    <property type="term" value="C:cytosol"/>
    <property type="evidence" value="ECO:0007005"/>
    <property type="project" value="PomBase"/>
</dbReference>
<dbReference type="GO" id="GO:0005576">
    <property type="term" value="C:extracellular region"/>
    <property type="evidence" value="ECO:0007669"/>
    <property type="project" value="UniProtKB-SubCell"/>
</dbReference>
<dbReference type="GO" id="GO:0005634">
    <property type="term" value="C:nucleus"/>
    <property type="evidence" value="ECO:0007005"/>
    <property type="project" value="PomBase"/>
</dbReference>
<dbReference type="GO" id="GO:0050660">
    <property type="term" value="F:flavin adenine dinucleotide binding"/>
    <property type="evidence" value="ECO:0000314"/>
    <property type="project" value="PomBase"/>
</dbReference>
<dbReference type="GO" id="GO:0051698">
    <property type="term" value="F:saccharopine oxidase activity"/>
    <property type="evidence" value="ECO:0000314"/>
    <property type="project" value="PomBase"/>
</dbReference>
<dbReference type="GO" id="GO:0008115">
    <property type="term" value="F:sarcosine oxidase activity"/>
    <property type="evidence" value="ECO:0000318"/>
    <property type="project" value="GO_Central"/>
</dbReference>
<dbReference type="GO" id="GO:0019477">
    <property type="term" value="P:L-lysine catabolic process"/>
    <property type="evidence" value="ECO:0000304"/>
    <property type="project" value="PomBase"/>
</dbReference>
<dbReference type="Gene3D" id="3.30.9.10">
    <property type="entry name" value="D-Amino Acid Oxidase, subunit A, domain 2"/>
    <property type="match status" value="1"/>
</dbReference>
<dbReference type="Gene3D" id="3.50.50.60">
    <property type="entry name" value="FAD/NAD(P)-binding domain"/>
    <property type="match status" value="1"/>
</dbReference>
<dbReference type="InterPro" id="IPR006076">
    <property type="entry name" value="FAD-dep_OxRdtase"/>
</dbReference>
<dbReference type="InterPro" id="IPR036188">
    <property type="entry name" value="FAD/NAD-bd_sf"/>
</dbReference>
<dbReference type="InterPro" id="IPR045170">
    <property type="entry name" value="MTOX"/>
</dbReference>
<dbReference type="PANTHER" id="PTHR10961:SF26">
    <property type="entry name" value="L-SACCHAROPINE OXIDASE"/>
    <property type="match status" value="1"/>
</dbReference>
<dbReference type="PANTHER" id="PTHR10961">
    <property type="entry name" value="PEROXISOMAL SARCOSINE OXIDASE"/>
    <property type="match status" value="1"/>
</dbReference>
<dbReference type="Pfam" id="PF01266">
    <property type="entry name" value="DAO"/>
    <property type="match status" value="1"/>
</dbReference>
<dbReference type="SUPFAM" id="SSF51905">
    <property type="entry name" value="FAD/NAD(P)-binding domain"/>
    <property type="match status" value="1"/>
</dbReference>
<evidence type="ECO:0000255" key="1"/>
<evidence type="ECO:0000269" key="2">
    <source>
    </source>
</evidence>
<evidence type="ECO:0000269" key="3">
    <source>
    </source>
</evidence>
<evidence type="ECO:0000305" key="4"/>
<evidence type="ECO:0000312" key="5">
    <source>
        <dbReference type="EMBL" id="CAB59618.1"/>
    </source>
</evidence>
<gene>
    <name evidence="5" type="primary">fap2</name>
    <name type="ORF">SPAC139.04c</name>
</gene>
<feature type="signal peptide" evidence="1">
    <location>
        <begin position="1"/>
        <end position="18"/>
    </location>
</feature>
<feature type="chain" id="PRO_0000347275" description="L-saccharopine oxidase" evidence="1">
    <location>
        <begin position="19"/>
        <end position="433"/>
    </location>
</feature>
<feature type="glycosylation site" description="N-linked (GlcNAc...) asparagine" evidence="1">
    <location>
        <position position="24"/>
    </location>
</feature>
<feature type="glycosylation site" description="N-linked (GlcNAc...) asparagine" evidence="1">
    <location>
        <position position="119"/>
    </location>
</feature>
<feature type="glycosylation site" description="N-linked (GlcNAc...) asparagine" evidence="1">
    <location>
        <position position="188"/>
    </location>
</feature>
<feature type="glycosylation site" description="N-linked (GlcNAc...) asparagine" evidence="1">
    <location>
        <position position="229"/>
    </location>
</feature>
<reference evidence="5" key="1">
    <citation type="journal article" date="2002" name="Nature">
        <title>The genome sequence of Schizosaccharomyces pombe.</title>
        <authorList>
            <person name="Wood V."/>
            <person name="Gwilliam R."/>
            <person name="Rajandream M.A."/>
            <person name="Lyne M.H."/>
            <person name="Lyne R."/>
            <person name="Stewart A."/>
            <person name="Sgouros J.G."/>
            <person name="Peat N."/>
            <person name="Hayles J."/>
            <person name="Baker S.G."/>
            <person name="Basham D."/>
            <person name="Bowman S."/>
            <person name="Brooks K."/>
            <person name="Brown D."/>
            <person name="Brown S."/>
            <person name="Chillingworth T."/>
            <person name="Churcher C.M."/>
            <person name="Collins M."/>
            <person name="Connor R."/>
            <person name="Cronin A."/>
            <person name="Davis P."/>
            <person name="Feltwell T."/>
            <person name="Fraser A."/>
            <person name="Gentles S."/>
            <person name="Goble A."/>
            <person name="Hamlin N."/>
            <person name="Harris D.E."/>
            <person name="Hidalgo J."/>
            <person name="Hodgson G."/>
            <person name="Holroyd S."/>
            <person name="Hornsby T."/>
            <person name="Howarth S."/>
            <person name="Huckle E.J."/>
            <person name="Hunt S."/>
            <person name="Jagels K."/>
            <person name="James K.D."/>
            <person name="Jones L."/>
            <person name="Jones M."/>
            <person name="Leather S."/>
            <person name="McDonald S."/>
            <person name="McLean J."/>
            <person name="Mooney P."/>
            <person name="Moule S."/>
            <person name="Mungall K.L."/>
            <person name="Murphy L.D."/>
            <person name="Niblett D."/>
            <person name="Odell C."/>
            <person name="Oliver K."/>
            <person name="O'Neil S."/>
            <person name="Pearson D."/>
            <person name="Quail M.A."/>
            <person name="Rabbinowitsch E."/>
            <person name="Rutherford K.M."/>
            <person name="Rutter S."/>
            <person name="Saunders D."/>
            <person name="Seeger K."/>
            <person name="Sharp S."/>
            <person name="Skelton J."/>
            <person name="Simmonds M.N."/>
            <person name="Squares R."/>
            <person name="Squares S."/>
            <person name="Stevens K."/>
            <person name="Taylor K."/>
            <person name="Taylor R.G."/>
            <person name="Tivey A."/>
            <person name="Walsh S.V."/>
            <person name="Warren T."/>
            <person name="Whitehead S."/>
            <person name="Woodward J.R."/>
            <person name="Volckaert G."/>
            <person name="Aert R."/>
            <person name="Robben J."/>
            <person name="Grymonprez B."/>
            <person name="Weltjens I."/>
            <person name="Vanstreels E."/>
            <person name="Rieger M."/>
            <person name="Schaefer M."/>
            <person name="Mueller-Auer S."/>
            <person name="Gabel C."/>
            <person name="Fuchs M."/>
            <person name="Duesterhoeft A."/>
            <person name="Fritzc C."/>
            <person name="Holzer E."/>
            <person name="Moestl D."/>
            <person name="Hilbert H."/>
            <person name="Borzym K."/>
            <person name="Langer I."/>
            <person name="Beck A."/>
            <person name="Lehrach H."/>
            <person name="Reinhardt R."/>
            <person name="Pohl T.M."/>
            <person name="Eger P."/>
            <person name="Zimmermann W."/>
            <person name="Wedler H."/>
            <person name="Wambutt R."/>
            <person name="Purnelle B."/>
            <person name="Goffeau A."/>
            <person name="Cadieu E."/>
            <person name="Dreano S."/>
            <person name="Gloux S."/>
            <person name="Lelaure V."/>
            <person name="Mottier S."/>
            <person name="Galibert F."/>
            <person name="Aves S.J."/>
            <person name="Xiang Z."/>
            <person name="Hunt C."/>
            <person name="Moore K."/>
            <person name="Hurst S.M."/>
            <person name="Lucas M."/>
            <person name="Rochet M."/>
            <person name="Gaillardin C."/>
            <person name="Tallada V.A."/>
            <person name="Garzon A."/>
            <person name="Thode G."/>
            <person name="Daga R.R."/>
            <person name="Cruzado L."/>
            <person name="Jimenez J."/>
            <person name="Sanchez M."/>
            <person name="del Rey F."/>
            <person name="Benito J."/>
            <person name="Dominguez A."/>
            <person name="Revuelta J.L."/>
            <person name="Moreno S."/>
            <person name="Armstrong J."/>
            <person name="Forsburg S.L."/>
            <person name="Cerutti L."/>
            <person name="Lowe T."/>
            <person name="McCombie W.R."/>
            <person name="Paulsen I."/>
            <person name="Potashkin J."/>
            <person name="Shpakovski G.V."/>
            <person name="Ussery D."/>
            <person name="Barrell B.G."/>
            <person name="Nurse P."/>
        </authorList>
    </citation>
    <scope>NUCLEOTIDE SEQUENCE [LARGE SCALE GENOMIC DNA]</scope>
    <source>
        <strain>972 / ATCC 24843</strain>
    </source>
</reference>
<reference evidence="4" key="2">
    <citation type="journal article" date="2004" name="J. Biosci. Bioeng.">
        <title>Characterization of two fructosyl-amino acid oxidase homologs of Schizosaccharomyces pombe.</title>
        <authorList>
            <person name="Yoshida N."/>
            <person name="Akazawa S."/>
            <person name="Katsuragi T."/>
            <person name="Tani Y."/>
        </authorList>
    </citation>
    <scope>FUNCTION</scope>
    <scope>CATALYTIC ACTIVITY</scope>
    <scope>COFACTOR</scope>
    <scope>BIOPHYSICOCHEMICAL PROPERTIES</scope>
    <scope>SUBUNIT</scope>
</reference>
<reference evidence="4" key="3">
    <citation type="journal article" date="2006" name="Nat. Biotechnol.">
        <title>ORFeome cloning and global analysis of protein localization in the fission yeast Schizosaccharomyces pombe.</title>
        <authorList>
            <person name="Matsuyama A."/>
            <person name="Arai R."/>
            <person name="Yashiroda Y."/>
            <person name="Shirai A."/>
            <person name="Kamata A."/>
            <person name="Sekido S."/>
            <person name="Kobayashi Y."/>
            <person name="Hashimoto A."/>
            <person name="Hamamoto M."/>
            <person name="Hiraoka Y."/>
            <person name="Horinouchi S."/>
            <person name="Yoshida M."/>
        </authorList>
    </citation>
    <scope>SUBCELLULAR LOCATION [LARGE SCALE ANALYSIS]</scope>
</reference>
<proteinExistence type="evidence at protein level"/>
<keyword id="KW-0963">Cytoplasm</keyword>
<keyword id="KW-0274">FAD</keyword>
<keyword id="KW-0285">Flavoprotein</keyword>
<keyword id="KW-0325">Glycoprotein</keyword>
<keyword id="KW-0539">Nucleus</keyword>
<keyword id="KW-0560">Oxidoreductase</keyword>
<keyword id="KW-1185">Reference proteome</keyword>
<keyword id="KW-0964">Secreted</keyword>
<keyword id="KW-0732">Signal</keyword>
<accession>Q9UTM9</accession>
<name>FAP2_SCHPO</name>
<organism>
    <name type="scientific">Schizosaccharomyces pombe (strain 972 / ATCC 24843)</name>
    <name type="common">Fission yeast</name>
    <dbReference type="NCBI Taxonomy" id="284812"/>
    <lineage>
        <taxon>Eukaryota</taxon>
        <taxon>Fungi</taxon>
        <taxon>Dikarya</taxon>
        <taxon>Ascomycota</taxon>
        <taxon>Taphrinomycotina</taxon>
        <taxon>Schizosaccharomycetes</taxon>
        <taxon>Schizosaccharomycetales</taxon>
        <taxon>Schizosaccharomycetaceae</taxon>
        <taxon>Schizosaccharomyces</taxon>
    </lineage>
</organism>
<sequence length="433" mass="48974">MSRTIVIVGCGVFGLSTAVELAKNHSFDNIIAIDAEPVPSSMSAANDINKIVRPEYADLKYMKLALEAMEKWRNDPELSSVYFECGRLSTISKDPYRARFDEVAQRNLRKLLGDSALINLSSSEEIRKKYPSLFSNSPLRSDMQAVVNEHAGYANSAASLKLLELKARELGVEFVFGKAGKFKKFVVNHSETDIDKNDNHVSVQTEDGTIYHADTILLAVGAYLNAYLNTSHRVCAKGLPVAHIQLTDEEFKTYKNMPIIFDPDCAYAFPPYPVTKLIKLASTGYEYVCNVETDYDENSKVVSIPHSGPSKSSLPKYAIIQMRRFLDTFLPDLADRSLINTKMCWISDTEDANFLIDKVPQFDNVFVANGDSGHAFKFLPNIGRYIAQRILGDLSEEWKDAWRWREDDKASELKWRCVRSLIDYKDAEFTYDK</sequence>
<comment type="catalytic activity">
    <reaction evidence="2">
        <text>L-saccharopine + O2 + H2O = (S)-2-amino-6-oxohexanoate + L-glutamate + H2O2</text>
        <dbReference type="Rhea" id="RHEA:28210"/>
        <dbReference type="ChEBI" id="CHEBI:15377"/>
        <dbReference type="ChEBI" id="CHEBI:15379"/>
        <dbReference type="ChEBI" id="CHEBI:16240"/>
        <dbReference type="ChEBI" id="CHEBI:29985"/>
        <dbReference type="ChEBI" id="CHEBI:57951"/>
        <dbReference type="ChEBI" id="CHEBI:58321"/>
        <dbReference type="EC" id="1.5.3.18"/>
    </reaction>
</comment>
<comment type="cofactor">
    <cofactor evidence="2">
        <name>FAD</name>
        <dbReference type="ChEBI" id="CHEBI:57692"/>
    </cofactor>
</comment>
<comment type="biophysicochemical properties">
    <kinetics>
        <KM evidence="2">9.02 mM for L-saccharopine</KM>
        <Vmax evidence="2">6.72 umol/min/mg enzyme for L-pipecolate</Vmax>
    </kinetics>
</comment>
<comment type="subunit">
    <text evidence="2">Monomer.</text>
</comment>
<comment type="subcellular location">
    <subcellularLocation>
        <location evidence="4">Secreted</location>
    </subcellularLocation>
    <subcellularLocation>
        <location evidence="3">Cytoplasm</location>
    </subcellularLocation>
    <subcellularLocation>
        <location evidence="3">Nucleus</location>
    </subcellularLocation>
</comment>
<comment type="similarity">
    <text evidence="4">Belongs to the MSOX/MTOX family.</text>
</comment>
<protein>
    <recommendedName>
        <fullName evidence="5">L-saccharopine oxidase</fullName>
        <ecNumber>1.5.3.18</ecNumber>
    </recommendedName>
</protein>